<organism>
    <name type="scientific">Lycaon pictus</name>
    <name type="common">African wild dog</name>
    <name type="synonym">Cape hunting dog</name>
    <dbReference type="NCBI Taxonomy" id="9622"/>
    <lineage>
        <taxon>Eukaryota</taxon>
        <taxon>Metazoa</taxon>
        <taxon>Chordata</taxon>
        <taxon>Craniata</taxon>
        <taxon>Vertebrata</taxon>
        <taxon>Euteleostomi</taxon>
        <taxon>Mammalia</taxon>
        <taxon>Eutheria</taxon>
        <taxon>Laurasiatheria</taxon>
        <taxon>Carnivora</taxon>
        <taxon>Caniformia</taxon>
        <taxon>Canidae</taxon>
        <taxon>Lycaon</taxon>
    </lineage>
</organism>
<feature type="signal peptide" evidence="4">
    <location>
        <begin position="1"/>
        <end position="26"/>
    </location>
</feature>
<feature type="chain" id="PRO_0000444584" description="Apolipoprotein C-I">
    <location>
        <begin position="27"/>
        <end position="88"/>
    </location>
</feature>
<feature type="chain" id="PRO_0000444585" description="Truncated apolipoprotein C-I" evidence="3">
    <location>
        <begin position="29"/>
        <end position="88"/>
    </location>
</feature>
<name>APOC1_LYCPI</name>
<accession>P0DPH0</accession>
<keyword id="KW-0445">Lipid transport</keyword>
<keyword id="KW-0964">Secreted</keyword>
<keyword id="KW-0732">Signal</keyword>
<keyword id="KW-0813">Transport</keyword>
<keyword id="KW-0850">VLDL</keyword>
<reference key="1">
    <citation type="submission" date="2016-10" db="EMBL/GenBank/DDBJ databases">
        <title>Genome sequence, population history, and pelage genetics of the endangered African wild dog (Lycaon pictus).</title>
        <authorList>
            <person name="Campana M.G."/>
            <person name="Parker L.D."/>
            <person name="Hawkins M.T."/>
            <person name="Young H.S."/>
            <person name="Helgen K.M."/>
        </authorList>
    </citation>
    <scope>NUCLEOTIDE SEQUENCE [LARGE SCALE GENOMIC DNA]</scope>
</reference>
<reference key="2">
    <citation type="unpublished observations" date="2018-05">
        <authorList>
            <person name="Puppione D.L."/>
        </authorList>
    </citation>
    <scope>IDENTIFICATION</scope>
</reference>
<comment type="function">
    <text evidence="1 2">Inhibitor of lipoprotein binding to the low density lipoprotein (LDL) receptor, LDL receptor-related protein, and very low density lipoprotein (VLDL) receptor. Associates with high density lipoproteins (HDL) and the triacylglycerol-rich lipoproteins in the plasma and makes up about 10% of the protein of the VLDL and 2% of that of HDL. Appears to interfere directly with fatty acid uptake and is also the major plasma inhibitor of cholesteryl ester transfer protein (CETP). Binds free fatty acids and reduces their intracellular esterification. Modulates the interaction of APOE with beta-migrating VLDL and inhibits binding of beta-VLDL to the LDL receptor-related protein.</text>
</comment>
<comment type="subcellular location">
    <subcellularLocation>
        <location evidence="1">Secreted</location>
    </subcellularLocation>
</comment>
<comment type="similarity">
    <text evidence="5">Belongs to the apolipoprotein C1 family.</text>
</comment>
<sequence length="88" mass="9727">MRLILSLPVLVVVLSMVLEGPAPAQAAGEISSTFERIPDKLKEFGNTLEDKARAAIESIKKSDIPAKTRNWFSEAFNKVKEHLKTAFS</sequence>
<proteinExistence type="inferred from homology"/>
<evidence type="ECO:0000250" key="1">
    <source>
        <dbReference type="UniProtKB" id="P02654"/>
    </source>
</evidence>
<evidence type="ECO:0000250" key="2">
    <source>
        <dbReference type="UniProtKB" id="P33047"/>
    </source>
</evidence>
<evidence type="ECO:0000250" key="3">
    <source>
        <dbReference type="UniProtKB" id="P86336"/>
    </source>
</evidence>
<evidence type="ECO:0000255" key="4"/>
<evidence type="ECO:0000305" key="5"/>
<dbReference type="EMBL" id="LPRB01000000">
    <property type="status" value="NOT_ANNOTATED_CDS"/>
    <property type="molecule type" value="Genomic_DNA"/>
</dbReference>
<dbReference type="SMR" id="P0DPH0"/>
<dbReference type="GO" id="GO:0034364">
    <property type="term" value="C:high-density lipoprotein particle"/>
    <property type="evidence" value="ECO:0007669"/>
    <property type="project" value="TreeGrafter"/>
</dbReference>
<dbReference type="GO" id="GO:0034361">
    <property type="term" value="C:very-low-density lipoprotein particle"/>
    <property type="evidence" value="ECO:0007669"/>
    <property type="project" value="UniProtKB-KW"/>
</dbReference>
<dbReference type="GO" id="GO:0005504">
    <property type="term" value="F:fatty acid binding"/>
    <property type="evidence" value="ECO:0007669"/>
    <property type="project" value="TreeGrafter"/>
</dbReference>
<dbReference type="GO" id="GO:0004859">
    <property type="term" value="F:phospholipase inhibitor activity"/>
    <property type="evidence" value="ECO:0007669"/>
    <property type="project" value="TreeGrafter"/>
</dbReference>
<dbReference type="GO" id="GO:0006869">
    <property type="term" value="P:lipid transport"/>
    <property type="evidence" value="ECO:0007669"/>
    <property type="project" value="UniProtKB-KW"/>
</dbReference>
<dbReference type="GO" id="GO:0042157">
    <property type="term" value="P:lipoprotein metabolic process"/>
    <property type="evidence" value="ECO:0007669"/>
    <property type="project" value="InterPro"/>
</dbReference>
<dbReference type="GO" id="GO:0032375">
    <property type="term" value="P:negative regulation of cholesterol transport"/>
    <property type="evidence" value="ECO:0007669"/>
    <property type="project" value="TreeGrafter"/>
</dbReference>
<dbReference type="GO" id="GO:0050995">
    <property type="term" value="P:negative regulation of lipid catabolic process"/>
    <property type="evidence" value="ECO:0007669"/>
    <property type="project" value="TreeGrafter"/>
</dbReference>
<dbReference type="GO" id="GO:0010916">
    <property type="term" value="P:negative regulation of very-low-density lipoprotein particle clearance"/>
    <property type="evidence" value="ECO:0007669"/>
    <property type="project" value="TreeGrafter"/>
</dbReference>
<dbReference type="GO" id="GO:0006641">
    <property type="term" value="P:triglyceride metabolic process"/>
    <property type="evidence" value="ECO:0007669"/>
    <property type="project" value="TreeGrafter"/>
</dbReference>
<dbReference type="GO" id="GO:0034447">
    <property type="term" value="P:very-low-density lipoprotein particle clearance"/>
    <property type="evidence" value="ECO:0007669"/>
    <property type="project" value="TreeGrafter"/>
</dbReference>
<dbReference type="Gene3D" id="4.10.260.30">
    <property type="entry name" value="Apolipoprotein C-I"/>
    <property type="match status" value="1"/>
</dbReference>
<dbReference type="InterPro" id="IPR043081">
    <property type="entry name" value="ApoC-1_sf"/>
</dbReference>
<dbReference type="InterPro" id="IPR006781">
    <property type="entry name" value="ApoC-I"/>
</dbReference>
<dbReference type="PANTHER" id="PTHR16565">
    <property type="entry name" value="APOLIPOPROTEIN C-I"/>
    <property type="match status" value="1"/>
</dbReference>
<dbReference type="PANTHER" id="PTHR16565:SF2">
    <property type="entry name" value="APOLIPOPROTEIN C-I"/>
    <property type="match status" value="1"/>
</dbReference>
<dbReference type="Pfam" id="PF04691">
    <property type="entry name" value="ApoC-I"/>
    <property type="match status" value="1"/>
</dbReference>
<gene>
    <name type="primary">APOC1</name>
</gene>
<protein>
    <recommendedName>
        <fullName>Apolipoprotein C-I</fullName>
        <shortName>Apo-CI</shortName>
        <shortName>ApoC-I</shortName>
    </recommendedName>
    <alternativeName>
        <fullName>Apolipoprotein C1</fullName>
    </alternativeName>
    <component>
        <recommendedName>
            <fullName>Truncated apolipoprotein C-I</fullName>
        </recommendedName>
    </component>
</protein>